<sequence>MRSEEEMQSCTDSEMEGGEDETSGFMDESAISNPFREREMRGMIGDFEYIEGKWIGSYRFVKQLGTGSSSKVVLGRDVRSGEKVAIKIIPRRVNGGETGDMEMRCDQRVFREVIISSVLNHPHIARLKNFLYSPTHYFLIFEYVKGRQLYDIIISSGPLKEKEGQRYFRQLLSAIDYIHRNSVVHRDLKIENILIDENDNVKLIDFGLSNFYDNKTLLNTFCGSLYFAAPELLQGQRYCGPEIDVWSLGVVLYAILCGCVPFDDEDVQGLQAKIMDADFKFCKTISREAMELIRGMIVAQPSSRMGLSQVIGSEWVNKGQKSRINSYAAKRYPIMKLNEKYIRPISRAIRFQFPNMEREIRRFHKICREEIGTLEQIYWSRRPVVSLYYLVSENLGGDDENEAYTDDGEEEPPQELPEAVHDFVRFMFSKEKGCGPRHVKKEVFLTSTSQDSLCSVKGKDCGLPQVRQTYLKGFFKGIRVKHIGSHNALKKVLLDIFNANNIIYEITEKSYFCSAYHEDLECLFKVSMYFNVLLNEYYLTVTPLNSERKVFRNVYEWISSGLRNRV</sequence>
<protein>
    <recommendedName>
        <fullName>Probable serine/threonine-protein kinase KIN1 homolog</fullName>
        <ecNumber>2.7.11.1</ecNumber>
    </recommendedName>
</protein>
<organism>
    <name type="scientific">Encephalitozoon cuniculi (strain GB-M1)</name>
    <name type="common">Microsporidian parasite</name>
    <dbReference type="NCBI Taxonomy" id="284813"/>
    <lineage>
        <taxon>Eukaryota</taxon>
        <taxon>Fungi</taxon>
        <taxon>Fungi incertae sedis</taxon>
        <taxon>Microsporidia</taxon>
        <taxon>Unikaryonidae</taxon>
        <taxon>Encephalitozoon</taxon>
    </lineage>
</organism>
<keyword id="KW-0067">ATP-binding</keyword>
<keyword id="KW-1003">Cell membrane</keyword>
<keyword id="KW-0963">Cytoplasm</keyword>
<keyword id="KW-0268">Exocytosis</keyword>
<keyword id="KW-0418">Kinase</keyword>
<keyword id="KW-0472">Membrane</keyword>
<keyword id="KW-0547">Nucleotide-binding</keyword>
<keyword id="KW-1185">Reference proteome</keyword>
<keyword id="KW-0723">Serine/threonine-protein kinase</keyword>
<keyword id="KW-0808">Transferase</keyword>
<evidence type="ECO:0000250" key="1"/>
<evidence type="ECO:0000255" key="2">
    <source>
        <dbReference type="PROSITE-ProRule" id="PRU00159"/>
    </source>
</evidence>
<evidence type="ECO:0000255" key="3">
    <source>
        <dbReference type="PROSITE-ProRule" id="PRU10027"/>
    </source>
</evidence>
<evidence type="ECO:0000256" key="4">
    <source>
        <dbReference type="SAM" id="MobiDB-lite"/>
    </source>
</evidence>
<evidence type="ECO:0000305" key="5"/>
<proteinExistence type="inferred from homology"/>
<dbReference type="EC" id="2.7.11.1"/>
<dbReference type="EMBL" id="AL590443">
    <property type="protein sequence ID" value="CAD26242.1"/>
    <property type="molecule type" value="Genomic_DNA"/>
</dbReference>
<dbReference type="RefSeq" id="NP_597607.1">
    <property type="nucleotide sequence ID" value="NM_001040971.1"/>
</dbReference>
<dbReference type="SMR" id="Q8SW31"/>
<dbReference type="FunCoup" id="Q8SW31">
    <property type="interactions" value="195"/>
</dbReference>
<dbReference type="STRING" id="284813.Q8SW31"/>
<dbReference type="GeneID" id="858769"/>
<dbReference type="KEGG" id="ecu:ECU03_0980"/>
<dbReference type="VEuPathDB" id="MicrosporidiaDB:ECU03_0980"/>
<dbReference type="HOGENOM" id="CLU_000288_59_11_1"/>
<dbReference type="InParanoid" id="Q8SW31"/>
<dbReference type="OMA" id="IRPTIKM"/>
<dbReference type="OrthoDB" id="193931at2759"/>
<dbReference type="Proteomes" id="UP000000819">
    <property type="component" value="Chromosome III"/>
</dbReference>
<dbReference type="GO" id="GO:0005737">
    <property type="term" value="C:cytoplasm"/>
    <property type="evidence" value="ECO:0007669"/>
    <property type="project" value="UniProtKB-SubCell"/>
</dbReference>
<dbReference type="GO" id="GO:0005886">
    <property type="term" value="C:plasma membrane"/>
    <property type="evidence" value="ECO:0007669"/>
    <property type="project" value="UniProtKB-SubCell"/>
</dbReference>
<dbReference type="GO" id="GO:0005524">
    <property type="term" value="F:ATP binding"/>
    <property type="evidence" value="ECO:0007669"/>
    <property type="project" value="UniProtKB-KW"/>
</dbReference>
<dbReference type="GO" id="GO:0106310">
    <property type="term" value="F:protein serine kinase activity"/>
    <property type="evidence" value="ECO:0007669"/>
    <property type="project" value="RHEA"/>
</dbReference>
<dbReference type="GO" id="GO:0004674">
    <property type="term" value="F:protein serine/threonine kinase activity"/>
    <property type="evidence" value="ECO:0007669"/>
    <property type="project" value="UniProtKB-KW"/>
</dbReference>
<dbReference type="GO" id="GO:0006887">
    <property type="term" value="P:exocytosis"/>
    <property type="evidence" value="ECO:0007669"/>
    <property type="project" value="UniProtKB-KW"/>
</dbReference>
<dbReference type="GO" id="GO:0035556">
    <property type="term" value="P:intracellular signal transduction"/>
    <property type="evidence" value="ECO:0007669"/>
    <property type="project" value="TreeGrafter"/>
</dbReference>
<dbReference type="GO" id="GO:0000226">
    <property type="term" value="P:microtubule cytoskeleton organization"/>
    <property type="evidence" value="ECO:0007669"/>
    <property type="project" value="TreeGrafter"/>
</dbReference>
<dbReference type="CDD" id="cd14077">
    <property type="entry name" value="STKc_Kin1_2"/>
    <property type="match status" value="1"/>
</dbReference>
<dbReference type="FunFam" id="1.10.510.10:FF:000571">
    <property type="entry name" value="Maternal embryonic leucine zipper kinase"/>
    <property type="match status" value="1"/>
</dbReference>
<dbReference type="Gene3D" id="1.10.510.10">
    <property type="entry name" value="Transferase(Phosphotransferase) domain 1"/>
    <property type="match status" value="1"/>
</dbReference>
<dbReference type="InterPro" id="IPR011009">
    <property type="entry name" value="Kinase-like_dom_sf"/>
</dbReference>
<dbReference type="InterPro" id="IPR000719">
    <property type="entry name" value="Prot_kinase_dom"/>
</dbReference>
<dbReference type="InterPro" id="IPR017441">
    <property type="entry name" value="Protein_kinase_ATP_BS"/>
</dbReference>
<dbReference type="InterPro" id="IPR008271">
    <property type="entry name" value="Ser/Thr_kinase_AS"/>
</dbReference>
<dbReference type="PANTHER" id="PTHR24346:SF82">
    <property type="entry name" value="KP78A-RELATED"/>
    <property type="match status" value="1"/>
</dbReference>
<dbReference type="PANTHER" id="PTHR24346">
    <property type="entry name" value="MAP/MICROTUBULE AFFINITY-REGULATING KINASE"/>
    <property type="match status" value="1"/>
</dbReference>
<dbReference type="Pfam" id="PF00069">
    <property type="entry name" value="Pkinase"/>
    <property type="match status" value="1"/>
</dbReference>
<dbReference type="SMART" id="SM00220">
    <property type="entry name" value="S_TKc"/>
    <property type="match status" value="1"/>
</dbReference>
<dbReference type="SUPFAM" id="SSF56112">
    <property type="entry name" value="Protein kinase-like (PK-like)"/>
    <property type="match status" value="1"/>
</dbReference>
<dbReference type="PROSITE" id="PS00107">
    <property type="entry name" value="PROTEIN_KINASE_ATP"/>
    <property type="match status" value="1"/>
</dbReference>
<dbReference type="PROSITE" id="PS50011">
    <property type="entry name" value="PROTEIN_KINASE_DOM"/>
    <property type="match status" value="1"/>
</dbReference>
<dbReference type="PROSITE" id="PS00108">
    <property type="entry name" value="PROTEIN_KINASE_ST"/>
    <property type="match status" value="1"/>
</dbReference>
<reference key="1">
    <citation type="journal article" date="2001" name="Nature">
        <title>Genome sequence and gene compaction of the eukaryote parasite Encephalitozoon cuniculi.</title>
        <authorList>
            <person name="Katinka M.D."/>
            <person name="Duprat S."/>
            <person name="Cornillot E."/>
            <person name="Metenier G."/>
            <person name="Thomarat F."/>
            <person name="Prensier G."/>
            <person name="Barbe V."/>
            <person name="Peyretaillade E."/>
            <person name="Brottier P."/>
            <person name="Wincker P."/>
            <person name="Delbac F."/>
            <person name="El Alaoui H."/>
            <person name="Peyret P."/>
            <person name="Saurin W."/>
            <person name="Gouy M."/>
            <person name="Weissenbach J."/>
            <person name="Vivares C.P."/>
        </authorList>
    </citation>
    <scope>NUCLEOTIDE SEQUENCE [LARGE SCALE GENOMIC DNA]</scope>
    <source>
        <strain>GB-M1</strain>
    </source>
</reference>
<reference key="2">
    <citation type="journal article" date="2007" name="BMC Genomics">
        <title>The complement of protein kinases of the microsporidium Encephalitozoon cuniculi in relation to those of Saccharomyces cerevisiae and Schizosaccharomyces pombe.</title>
        <authorList>
            <person name="Miranda-Saavedra D."/>
            <person name="Stark M.J.R."/>
            <person name="Packer J.C."/>
            <person name="Vivares C.P."/>
            <person name="Doerig C."/>
            <person name="Barton G.J."/>
        </authorList>
    </citation>
    <scope>PREDICTION OF FUNCTION</scope>
</reference>
<feature type="chain" id="PRO_0000385508" description="Probable serine/threonine-protein kinase KIN1 homolog">
    <location>
        <begin position="1"/>
        <end position="566"/>
    </location>
</feature>
<feature type="domain" description="Protein kinase" evidence="2">
    <location>
        <begin position="58"/>
        <end position="316"/>
    </location>
</feature>
<feature type="region of interest" description="Disordered" evidence="4">
    <location>
        <begin position="1"/>
        <end position="27"/>
    </location>
</feature>
<feature type="compositionally biased region" description="Acidic residues" evidence="4">
    <location>
        <begin position="13"/>
        <end position="22"/>
    </location>
</feature>
<feature type="active site" description="Proton acceptor" evidence="2 3">
    <location>
        <position position="187"/>
    </location>
</feature>
<feature type="binding site" evidence="2">
    <location>
        <begin position="64"/>
        <end position="72"/>
    </location>
    <ligand>
        <name>ATP</name>
        <dbReference type="ChEBI" id="CHEBI:30616"/>
    </ligand>
</feature>
<feature type="binding site" evidence="2">
    <location>
        <position position="87"/>
    </location>
    <ligand>
        <name>ATP</name>
        <dbReference type="ChEBI" id="CHEBI:30616"/>
    </ligand>
</feature>
<name>KIN1_ENCCU</name>
<accession>Q8SW31</accession>
<gene>
    <name type="primary">KIN1</name>
    <name type="ordered locus">ECU03_0980</name>
</gene>
<comment type="function">
    <text evidence="1">Serine/threonine protein kinase involved in regulation of exocytosis.</text>
</comment>
<comment type="catalytic activity">
    <reaction>
        <text>L-seryl-[protein] + ATP = O-phospho-L-seryl-[protein] + ADP + H(+)</text>
        <dbReference type="Rhea" id="RHEA:17989"/>
        <dbReference type="Rhea" id="RHEA-COMP:9863"/>
        <dbReference type="Rhea" id="RHEA-COMP:11604"/>
        <dbReference type="ChEBI" id="CHEBI:15378"/>
        <dbReference type="ChEBI" id="CHEBI:29999"/>
        <dbReference type="ChEBI" id="CHEBI:30616"/>
        <dbReference type="ChEBI" id="CHEBI:83421"/>
        <dbReference type="ChEBI" id="CHEBI:456216"/>
        <dbReference type="EC" id="2.7.11.1"/>
    </reaction>
</comment>
<comment type="catalytic activity">
    <reaction>
        <text>L-threonyl-[protein] + ATP = O-phospho-L-threonyl-[protein] + ADP + H(+)</text>
        <dbReference type="Rhea" id="RHEA:46608"/>
        <dbReference type="Rhea" id="RHEA-COMP:11060"/>
        <dbReference type="Rhea" id="RHEA-COMP:11605"/>
        <dbReference type="ChEBI" id="CHEBI:15378"/>
        <dbReference type="ChEBI" id="CHEBI:30013"/>
        <dbReference type="ChEBI" id="CHEBI:30616"/>
        <dbReference type="ChEBI" id="CHEBI:61977"/>
        <dbReference type="ChEBI" id="CHEBI:456216"/>
        <dbReference type="EC" id="2.7.11.1"/>
    </reaction>
</comment>
<comment type="subcellular location">
    <subcellularLocation>
        <location evidence="1">Cytoplasm</location>
    </subcellularLocation>
    <subcellularLocation>
        <location evidence="1">Cell membrane</location>
        <topology evidence="1">Peripheral membrane protein</topology>
        <orientation evidence="1">Cytoplasmic side</orientation>
    </subcellularLocation>
</comment>
<comment type="similarity">
    <text evidence="5">Belongs to the protein kinase superfamily. CAMK Ser/Thr protein kinase family. NIM1 subfamily.</text>
</comment>